<protein>
    <recommendedName>
        <fullName evidence="1">Elongation factor 4</fullName>
        <shortName evidence="1">EF-4</shortName>
        <ecNumber evidence="1">3.6.5.n1</ecNumber>
    </recommendedName>
    <alternativeName>
        <fullName evidence="1">Ribosomal back-translocase LepA</fullName>
    </alternativeName>
</protein>
<proteinExistence type="inferred from homology"/>
<gene>
    <name evidence="1" type="primary">lepA</name>
    <name type="ordered locus">CMS1749</name>
</gene>
<dbReference type="EC" id="3.6.5.n1" evidence="1"/>
<dbReference type="EMBL" id="AM849034">
    <property type="protein sequence ID" value="CAQ01851.1"/>
    <property type="molecule type" value="Genomic_DNA"/>
</dbReference>
<dbReference type="RefSeq" id="WP_012299095.1">
    <property type="nucleotide sequence ID" value="NZ_MZMN01000003.1"/>
</dbReference>
<dbReference type="SMR" id="B0RCT0"/>
<dbReference type="STRING" id="31964.CMS1749"/>
<dbReference type="KEGG" id="cms:CMS1749"/>
<dbReference type="eggNOG" id="COG0481">
    <property type="taxonomic scope" value="Bacteria"/>
</dbReference>
<dbReference type="HOGENOM" id="CLU_009995_3_3_11"/>
<dbReference type="OrthoDB" id="9801472at2"/>
<dbReference type="Proteomes" id="UP000001318">
    <property type="component" value="Chromosome"/>
</dbReference>
<dbReference type="GO" id="GO:0005886">
    <property type="term" value="C:plasma membrane"/>
    <property type="evidence" value="ECO:0007669"/>
    <property type="project" value="UniProtKB-SubCell"/>
</dbReference>
<dbReference type="GO" id="GO:0005525">
    <property type="term" value="F:GTP binding"/>
    <property type="evidence" value="ECO:0007669"/>
    <property type="project" value="UniProtKB-UniRule"/>
</dbReference>
<dbReference type="GO" id="GO:0003924">
    <property type="term" value="F:GTPase activity"/>
    <property type="evidence" value="ECO:0007669"/>
    <property type="project" value="UniProtKB-UniRule"/>
</dbReference>
<dbReference type="GO" id="GO:0043022">
    <property type="term" value="F:ribosome binding"/>
    <property type="evidence" value="ECO:0007669"/>
    <property type="project" value="UniProtKB-UniRule"/>
</dbReference>
<dbReference type="GO" id="GO:0003746">
    <property type="term" value="F:translation elongation factor activity"/>
    <property type="evidence" value="ECO:0007669"/>
    <property type="project" value="UniProtKB-UniRule"/>
</dbReference>
<dbReference type="GO" id="GO:0045727">
    <property type="term" value="P:positive regulation of translation"/>
    <property type="evidence" value="ECO:0007669"/>
    <property type="project" value="UniProtKB-UniRule"/>
</dbReference>
<dbReference type="CDD" id="cd03699">
    <property type="entry name" value="EF4_II"/>
    <property type="match status" value="1"/>
</dbReference>
<dbReference type="CDD" id="cd16260">
    <property type="entry name" value="EF4_III"/>
    <property type="match status" value="1"/>
</dbReference>
<dbReference type="CDD" id="cd01890">
    <property type="entry name" value="LepA"/>
    <property type="match status" value="1"/>
</dbReference>
<dbReference type="CDD" id="cd03709">
    <property type="entry name" value="lepA_C"/>
    <property type="match status" value="1"/>
</dbReference>
<dbReference type="FunFam" id="3.40.50.300:FF:000078">
    <property type="entry name" value="Elongation factor 4"/>
    <property type="match status" value="1"/>
</dbReference>
<dbReference type="FunFam" id="2.40.30.10:FF:000015">
    <property type="entry name" value="Translation factor GUF1, mitochondrial"/>
    <property type="match status" value="1"/>
</dbReference>
<dbReference type="FunFam" id="3.30.70.240:FF:000007">
    <property type="entry name" value="Translation factor GUF1, mitochondrial"/>
    <property type="match status" value="1"/>
</dbReference>
<dbReference type="FunFam" id="3.30.70.2570:FF:000001">
    <property type="entry name" value="Translation factor GUF1, mitochondrial"/>
    <property type="match status" value="1"/>
</dbReference>
<dbReference type="FunFam" id="3.30.70.870:FF:000004">
    <property type="entry name" value="Translation factor GUF1, mitochondrial"/>
    <property type="match status" value="1"/>
</dbReference>
<dbReference type="Gene3D" id="3.30.70.240">
    <property type="match status" value="1"/>
</dbReference>
<dbReference type="Gene3D" id="3.30.70.2570">
    <property type="entry name" value="Elongation factor 4, C-terminal domain"/>
    <property type="match status" value="1"/>
</dbReference>
<dbReference type="Gene3D" id="3.30.70.870">
    <property type="entry name" value="Elongation Factor G (Translational Gtpase), domain 3"/>
    <property type="match status" value="1"/>
</dbReference>
<dbReference type="Gene3D" id="3.40.50.300">
    <property type="entry name" value="P-loop containing nucleotide triphosphate hydrolases"/>
    <property type="match status" value="1"/>
</dbReference>
<dbReference type="Gene3D" id="2.40.30.10">
    <property type="entry name" value="Translation factors"/>
    <property type="match status" value="1"/>
</dbReference>
<dbReference type="HAMAP" id="MF_00071">
    <property type="entry name" value="LepA"/>
    <property type="match status" value="1"/>
</dbReference>
<dbReference type="InterPro" id="IPR006297">
    <property type="entry name" value="EF-4"/>
</dbReference>
<dbReference type="InterPro" id="IPR035647">
    <property type="entry name" value="EFG_III/V"/>
</dbReference>
<dbReference type="InterPro" id="IPR000640">
    <property type="entry name" value="EFG_V-like"/>
</dbReference>
<dbReference type="InterPro" id="IPR004161">
    <property type="entry name" value="EFTu-like_2"/>
</dbReference>
<dbReference type="InterPro" id="IPR031157">
    <property type="entry name" value="G_TR_CS"/>
</dbReference>
<dbReference type="InterPro" id="IPR038363">
    <property type="entry name" value="LepA_C_sf"/>
</dbReference>
<dbReference type="InterPro" id="IPR013842">
    <property type="entry name" value="LepA_CTD"/>
</dbReference>
<dbReference type="InterPro" id="IPR035654">
    <property type="entry name" value="LepA_IV"/>
</dbReference>
<dbReference type="InterPro" id="IPR027417">
    <property type="entry name" value="P-loop_NTPase"/>
</dbReference>
<dbReference type="InterPro" id="IPR005225">
    <property type="entry name" value="Small_GTP-bd"/>
</dbReference>
<dbReference type="InterPro" id="IPR000795">
    <property type="entry name" value="T_Tr_GTP-bd_dom"/>
</dbReference>
<dbReference type="InterPro" id="IPR009000">
    <property type="entry name" value="Transl_B-barrel_sf"/>
</dbReference>
<dbReference type="NCBIfam" id="TIGR01393">
    <property type="entry name" value="lepA"/>
    <property type="match status" value="1"/>
</dbReference>
<dbReference type="NCBIfam" id="TIGR00231">
    <property type="entry name" value="small_GTP"/>
    <property type="match status" value="1"/>
</dbReference>
<dbReference type="PANTHER" id="PTHR43512:SF4">
    <property type="entry name" value="TRANSLATION FACTOR GUF1 HOMOLOG, CHLOROPLASTIC"/>
    <property type="match status" value="1"/>
</dbReference>
<dbReference type="PANTHER" id="PTHR43512">
    <property type="entry name" value="TRANSLATION FACTOR GUF1-RELATED"/>
    <property type="match status" value="1"/>
</dbReference>
<dbReference type="Pfam" id="PF00679">
    <property type="entry name" value="EFG_C"/>
    <property type="match status" value="1"/>
</dbReference>
<dbReference type="Pfam" id="PF00009">
    <property type="entry name" value="GTP_EFTU"/>
    <property type="match status" value="1"/>
</dbReference>
<dbReference type="Pfam" id="PF03144">
    <property type="entry name" value="GTP_EFTU_D2"/>
    <property type="match status" value="1"/>
</dbReference>
<dbReference type="Pfam" id="PF06421">
    <property type="entry name" value="LepA_C"/>
    <property type="match status" value="1"/>
</dbReference>
<dbReference type="PRINTS" id="PR00315">
    <property type="entry name" value="ELONGATNFCT"/>
</dbReference>
<dbReference type="SMART" id="SM00838">
    <property type="entry name" value="EFG_C"/>
    <property type="match status" value="1"/>
</dbReference>
<dbReference type="SUPFAM" id="SSF54980">
    <property type="entry name" value="EF-G C-terminal domain-like"/>
    <property type="match status" value="2"/>
</dbReference>
<dbReference type="SUPFAM" id="SSF52540">
    <property type="entry name" value="P-loop containing nucleoside triphosphate hydrolases"/>
    <property type="match status" value="1"/>
</dbReference>
<dbReference type="SUPFAM" id="SSF50447">
    <property type="entry name" value="Translation proteins"/>
    <property type="match status" value="1"/>
</dbReference>
<dbReference type="PROSITE" id="PS00301">
    <property type="entry name" value="G_TR_1"/>
    <property type="match status" value="1"/>
</dbReference>
<dbReference type="PROSITE" id="PS51722">
    <property type="entry name" value="G_TR_2"/>
    <property type="match status" value="1"/>
</dbReference>
<accession>B0RCT0</accession>
<sequence length="615" mass="67077">MSPLATKALRPAATDPASIRNFCIIAHIDHGKSTLADRMLQMTGVVDSRSMRAQYLDRMDIERERGITIKSQAVRMPWELDGQTYALNMIDTPGHVDFSYEVSRSLAACEGAILLVDAAQGIEAQTLANLYLALENDLTIIPVLNKIDLPAADPDKYAAELASLIGGDPSDVLRVSGKTGAGVEDLLDRVSRTIPAPVGDPDAAARAMIFDSVYDAYRGVVTYVRMIDGKLSPREKISMMSTRATHEILEIGVSSPEPTPSDGLGVGEVGYLITGVKDVRQSKVGDTVTTAARPATEALPGYTEPLPMVFSGLYPIDGSDYPDLRDALDKLKLSDAALVYEPETSVALGFGFRCGFLGLLHLEIITERLSREFGLDLITTAPSVIYEVTSEDKKTVTVTNPSEFPGGKIVSVSEPVVKAAILAPKDYVGTIMELCQSRRGILLGMEYLGEDRVEIRYTMPLGEIVFDFFDNLKSKTAGYASLDYEPAGSQDSDLVKVDILLQGEQVDAFSAIVHRDKAYAYGVLMTGRLRELIPRQQFEVPIQAAIGARIIARESIRAMRKDVLAKCYGGDITRKRKLLEKQKEGKKRMKMVGRVEVPQEAFIAALSGDTEKKAK</sequence>
<name>LEPA_CLASE</name>
<feature type="chain" id="PRO_1000075125" description="Elongation factor 4">
    <location>
        <begin position="1"/>
        <end position="615"/>
    </location>
</feature>
<feature type="domain" description="tr-type G">
    <location>
        <begin position="17"/>
        <end position="198"/>
    </location>
</feature>
<feature type="binding site" evidence="1">
    <location>
        <begin position="29"/>
        <end position="34"/>
    </location>
    <ligand>
        <name>GTP</name>
        <dbReference type="ChEBI" id="CHEBI:37565"/>
    </ligand>
</feature>
<feature type="binding site" evidence="1">
    <location>
        <begin position="145"/>
        <end position="148"/>
    </location>
    <ligand>
        <name>GTP</name>
        <dbReference type="ChEBI" id="CHEBI:37565"/>
    </ligand>
</feature>
<evidence type="ECO:0000255" key="1">
    <source>
        <dbReference type="HAMAP-Rule" id="MF_00071"/>
    </source>
</evidence>
<comment type="function">
    <text evidence="1">Required for accurate and efficient protein synthesis under certain stress conditions. May act as a fidelity factor of the translation reaction, by catalyzing a one-codon backward translocation of tRNAs on improperly translocated ribosomes. Back-translocation proceeds from a post-translocation (POST) complex to a pre-translocation (PRE) complex, thus giving elongation factor G a second chance to translocate the tRNAs correctly. Binds to ribosomes in a GTP-dependent manner.</text>
</comment>
<comment type="catalytic activity">
    <reaction evidence="1">
        <text>GTP + H2O = GDP + phosphate + H(+)</text>
        <dbReference type="Rhea" id="RHEA:19669"/>
        <dbReference type="ChEBI" id="CHEBI:15377"/>
        <dbReference type="ChEBI" id="CHEBI:15378"/>
        <dbReference type="ChEBI" id="CHEBI:37565"/>
        <dbReference type="ChEBI" id="CHEBI:43474"/>
        <dbReference type="ChEBI" id="CHEBI:58189"/>
        <dbReference type="EC" id="3.6.5.n1"/>
    </reaction>
</comment>
<comment type="subcellular location">
    <subcellularLocation>
        <location evidence="1">Cell membrane</location>
        <topology evidence="1">Peripheral membrane protein</topology>
        <orientation evidence="1">Cytoplasmic side</orientation>
    </subcellularLocation>
</comment>
<comment type="similarity">
    <text evidence="1">Belongs to the TRAFAC class translation factor GTPase superfamily. Classic translation factor GTPase family. LepA subfamily.</text>
</comment>
<keyword id="KW-1003">Cell membrane</keyword>
<keyword id="KW-0342">GTP-binding</keyword>
<keyword id="KW-0378">Hydrolase</keyword>
<keyword id="KW-0472">Membrane</keyword>
<keyword id="KW-0547">Nucleotide-binding</keyword>
<keyword id="KW-0648">Protein biosynthesis</keyword>
<reference key="1">
    <citation type="journal article" date="2008" name="J. Bacteriol.">
        <title>Genome of the actinomycete plant pathogen Clavibacter michiganensis subsp. sepedonicus suggests recent niche adaptation.</title>
        <authorList>
            <person name="Bentley S.D."/>
            <person name="Corton C."/>
            <person name="Brown S.E."/>
            <person name="Barron A."/>
            <person name="Clark L."/>
            <person name="Doggett J."/>
            <person name="Harris B."/>
            <person name="Ormond D."/>
            <person name="Quail M.A."/>
            <person name="May G."/>
            <person name="Francis D."/>
            <person name="Knudson D."/>
            <person name="Parkhill J."/>
            <person name="Ishimaru C.A."/>
        </authorList>
    </citation>
    <scope>NUCLEOTIDE SEQUENCE [LARGE SCALE GENOMIC DNA]</scope>
    <source>
        <strain>ATCC 33113 / DSM 20744 / JCM 9667 / LMG 2889 / ICMP 2535 / C-1</strain>
    </source>
</reference>
<organism>
    <name type="scientific">Clavibacter sepedonicus</name>
    <name type="common">Clavibacter michiganensis subsp. sepedonicus</name>
    <dbReference type="NCBI Taxonomy" id="31964"/>
    <lineage>
        <taxon>Bacteria</taxon>
        <taxon>Bacillati</taxon>
        <taxon>Actinomycetota</taxon>
        <taxon>Actinomycetes</taxon>
        <taxon>Micrococcales</taxon>
        <taxon>Microbacteriaceae</taxon>
        <taxon>Clavibacter</taxon>
    </lineage>
</organism>